<reference key="1">
    <citation type="journal article" date="2007" name="Curr. Biol.">
        <title>Reduced genome of the thioautotrophic intracellular symbiont in a deep-sea clam, Calyptogena okutanii.</title>
        <authorList>
            <person name="Kuwahara H."/>
            <person name="Yoshida T."/>
            <person name="Takaki Y."/>
            <person name="Shimamura S."/>
            <person name="Nishi S."/>
            <person name="Harada M."/>
            <person name="Matsuyama K."/>
            <person name="Takishita K."/>
            <person name="Kawato M."/>
            <person name="Uematsu K."/>
            <person name="Fujiwara Y."/>
            <person name="Sato T."/>
            <person name="Kato C."/>
            <person name="Kitagawa M."/>
            <person name="Kato I."/>
            <person name="Maruyama T."/>
        </authorList>
    </citation>
    <scope>NUCLEOTIDE SEQUENCE [LARGE SCALE GENOMIC DNA]</scope>
    <source>
        <strain>HA</strain>
    </source>
</reference>
<feature type="chain" id="PRO_1000009595" description="tRNA-specific 2-thiouridylase MnmA">
    <location>
        <begin position="1"/>
        <end position="362"/>
    </location>
</feature>
<feature type="region of interest" description="Interaction with target base in tRNA" evidence="1">
    <location>
        <begin position="99"/>
        <end position="101"/>
    </location>
</feature>
<feature type="region of interest" description="Interaction with tRNA" evidence="1">
    <location>
        <begin position="150"/>
        <end position="152"/>
    </location>
</feature>
<feature type="region of interest" description="Interaction with tRNA" evidence="1">
    <location>
        <begin position="310"/>
        <end position="311"/>
    </location>
</feature>
<feature type="active site" description="Nucleophile" evidence="1">
    <location>
        <position position="104"/>
    </location>
</feature>
<feature type="active site" description="Cysteine persulfide intermediate" evidence="1">
    <location>
        <position position="200"/>
    </location>
</feature>
<feature type="binding site" evidence="1">
    <location>
        <begin position="13"/>
        <end position="20"/>
    </location>
    <ligand>
        <name>ATP</name>
        <dbReference type="ChEBI" id="CHEBI:30616"/>
    </ligand>
</feature>
<feature type="binding site" evidence="1">
    <location>
        <position position="39"/>
    </location>
    <ligand>
        <name>ATP</name>
        <dbReference type="ChEBI" id="CHEBI:30616"/>
    </ligand>
</feature>
<feature type="binding site" evidence="1">
    <location>
        <position position="128"/>
    </location>
    <ligand>
        <name>ATP</name>
        <dbReference type="ChEBI" id="CHEBI:30616"/>
    </ligand>
</feature>
<feature type="site" description="Interaction with tRNA" evidence="1">
    <location>
        <position position="129"/>
    </location>
</feature>
<feature type="site" description="Interaction with tRNA" evidence="1">
    <location>
        <position position="343"/>
    </location>
</feature>
<feature type="disulfide bond" description="Alternate" evidence="1">
    <location>
        <begin position="104"/>
        <end position="200"/>
    </location>
</feature>
<protein>
    <recommendedName>
        <fullName evidence="1">tRNA-specific 2-thiouridylase MnmA</fullName>
        <ecNumber evidence="1">2.8.1.13</ecNumber>
    </recommendedName>
</protein>
<evidence type="ECO:0000255" key="1">
    <source>
        <dbReference type="HAMAP-Rule" id="MF_00144"/>
    </source>
</evidence>
<organism>
    <name type="scientific">Vesicomyosocius okutanii subsp. Calyptogena okutanii (strain HA)</name>
    <dbReference type="NCBI Taxonomy" id="412965"/>
    <lineage>
        <taxon>Bacteria</taxon>
        <taxon>Pseudomonadati</taxon>
        <taxon>Pseudomonadota</taxon>
        <taxon>Gammaproteobacteria</taxon>
        <taxon>Candidatus Pseudothioglobaceae</taxon>
        <taxon>Candidatus Vesicomyosocius</taxon>
    </lineage>
</organism>
<gene>
    <name evidence="1" type="primary">mnmA</name>
    <name type="synonym">trmU</name>
    <name type="ordered locus">COSY_0691</name>
</gene>
<proteinExistence type="inferred from homology"/>
<keyword id="KW-0067">ATP-binding</keyword>
<keyword id="KW-0963">Cytoplasm</keyword>
<keyword id="KW-1015">Disulfide bond</keyword>
<keyword id="KW-0547">Nucleotide-binding</keyword>
<keyword id="KW-1185">Reference proteome</keyword>
<keyword id="KW-0694">RNA-binding</keyword>
<keyword id="KW-0808">Transferase</keyword>
<keyword id="KW-0819">tRNA processing</keyword>
<keyword id="KW-0820">tRNA-binding</keyword>
<name>MNMA_VESOH</name>
<sequence length="362" mass="40950">MKNLNKNTKIIVGLSGGVDSSVTALLLLKQGYQVEALFMKNWEEDDKGRYCSAKQDLSDAQNITNKLSIKLHTINFSVDYWNDVFTHFLKEYKKGRTPNPDILCNQKIKFGAFLKHAISLGADKIATGHYARIAKKNGTYQLKTGLDNNKDQSYFLHLLSQYQLSKSLFPLGETNKIDVRNIATENGFVTAKKKDSTGICFIGERKFSEFLATYLPKQQGNIVGEQGQFIKHHQGLAFYTIGQRKGLEIGGGFGKSGKPWFVADKCIERNELVVVQGDHTLLYYQTLNTSKPYWINTPPTLPMTCNAKIRYRQQSQSCMISQDNNKQLKIIFKQPQRAITPGQSIVFYDNETCLGGAIIEYR</sequence>
<accession>A5CW80</accession>
<dbReference type="EC" id="2.8.1.13" evidence="1"/>
<dbReference type="EMBL" id="AP009247">
    <property type="protein sequence ID" value="BAF61803.1"/>
    <property type="molecule type" value="Genomic_DNA"/>
</dbReference>
<dbReference type="RefSeq" id="WP_011930073.1">
    <property type="nucleotide sequence ID" value="NC_009465.1"/>
</dbReference>
<dbReference type="SMR" id="A5CW80"/>
<dbReference type="STRING" id="412965.COSY_0691"/>
<dbReference type="KEGG" id="vok:COSY_0691"/>
<dbReference type="eggNOG" id="COG0482">
    <property type="taxonomic scope" value="Bacteria"/>
</dbReference>
<dbReference type="HOGENOM" id="CLU_035188_1_0_6"/>
<dbReference type="OrthoDB" id="9800696at2"/>
<dbReference type="Proteomes" id="UP000000247">
    <property type="component" value="Chromosome"/>
</dbReference>
<dbReference type="GO" id="GO:0005737">
    <property type="term" value="C:cytoplasm"/>
    <property type="evidence" value="ECO:0007669"/>
    <property type="project" value="UniProtKB-SubCell"/>
</dbReference>
<dbReference type="GO" id="GO:0005524">
    <property type="term" value="F:ATP binding"/>
    <property type="evidence" value="ECO:0007669"/>
    <property type="project" value="UniProtKB-KW"/>
</dbReference>
<dbReference type="GO" id="GO:0000049">
    <property type="term" value="F:tRNA binding"/>
    <property type="evidence" value="ECO:0007669"/>
    <property type="project" value="UniProtKB-KW"/>
</dbReference>
<dbReference type="GO" id="GO:0103016">
    <property type="term" value="F:tRNA-uridine 2-sulfurtransferase activity"/>
    <property type="evidence" value="ECO:0007669"/>
    <property type="project" value="UniProtKB-EC"/>
</dbReference>
<dbReference type="GO" id="GO:0002143">
    <property type="term" value="P:tRNA wobble position uridine thiolation"/>
    <property type="evidence" value="ECO:0007669"/>
    <property type="project" value="TreeGrafter"/>
</dbReference>
<dbReference type="CDD" id="cd01998">
    <property type="entry name" value="MnmA_TRMU-like"/>
    <property type="match status" value="1"/>
</dbReference>
<dbReference type="FunFam" id="2.30.30.280:FF:000001">
    <property type="entry name" value="tRNA-specific 2-thiouridylase MnmA"/>
    <property type="match status" value="1"/>
</dbReference>
<dbReference type="FunFam" id="2.40.30.10:FF:000023">
    <property type="entry name" value="tRNA-specific 2-thiouridylase MnmA"/>
    <property type="match status" value="1"/>
</dbReference>
<dbReference type="FunFam" id="3.40.50.620:FF:000004">
    <property type="entry name" value="tRNA-specific 2-thiouridylase MnmA"/>
    <property type="match status" value="1"/>
</dbReference>
<dbReference type="Gene3D" id="2.30.30.280">
    <property type="entry name" value="Adenine nucleotide alpha hydrolases-like domains"/>
    <property type="match status" value="1"/>
</dbReference>
<dbReference type="Gene3D" id="3.40.50.620">
    <property type="entry name" value="HUPs"/>
    <property type="match status" value="1"/>
</dbReference>
<dbReference type="Gene3D" id="2.40.30.10">
    <property type="entry name" value="Translation factors"/>
    <property type="match status" value="1"/>
</dbReference>
<dbReference type="HAMAP" id="MF_00144">
    <property type="entry name" value="tRNA_thiouridyl_MnmA"/>
    <property type="match status" value="1"/>
</dbReference>
<dbReference type="InterPro" id="IPR004506">
    <property type="entry name" value="MnmA-like"/>
</dbReference>
<dbReference type="InterPro" id="IPR046885">
    <property type="entry name" value="MnmA-like_C"/>
</dbReference>
<dbReference type="InterPro" id="IPR046884">
    <property type="entry name" value="MnmA-like_central"/>
</dbReference>
<dbReference type="InterPro" id="IPR023382">
    <property type="entry name" value="MnmA-like_central_sf"/>
</dbReference>
<dbReference type="InterPro" id="IPR014729">
    <property type="entry name" value="Rossmann-like_a/b/a_fold"/>
</dbReference>
<dbReference type="NCBIfam" id="NF001138">
    <property type="entry name" value="PRK00143.1"/>
    <property type="match status" value="1"/>
</dbReference>
<dbReference type="NCBIfam" id="TIGR00420">
    <property type="entry name" value="trmU"/>
    <property type="match status" value="1"/>
</dbReference>
<dbReference type="PANTHER" id="PTHR11933:SF5">
    <property type="entry name" value="MITOCHONDRIAL TRNA-SPECIFIC 2-THIOURIDYLASE 1"/>
    <property type="match status" value="1"/>
</dbReference>
<dbReference type="PANTHER" id="PTHR11933">
    <property type="entry name" value="TRNA 5-METHYLAMINOMETHYL-2-THIOURIDYLATE -METHYLTRANSFERASE"/>
    <property type="match status" value="1"/>
</dbReference>
<dbReference type="Pfam" id="PF03054">
    <property type="entry name" value="tRNA_Me_trans"/>
    <property type="match status" value="1"/>
</dbReference>
<dbReference type="Pfam" id="PF20258">
    <property type="entry name" value="tRNA_Me_trans_C"/>
    <property type="match status" value="1"/>
</dbReference>
<dbReference type="Pfam" id="PF20259">
    <property type="entry name" value="tRNA_Me_trans_M"/>
    <property type="match status" value="1"/>
</dbReference>
<dbReference type="SUPFAM" id="SSF52402">
    <property type="entry name" value="Adenine nucleotide alpha hydrolases-like"/>
    <property type="match status" value="1"/>
</dbReference>
<comment type="function">
    <text evidence="1">Catalyzes the 2-thiolation of uridine at the wobble position (U34) of tRNA, leading to the formation of s(2)U34.</text>
</comment>
<comment type="catalytic activity">
    <reaction evidence="1">
        <text>S-sulfanyl-L-cysteinyl-[protein] + uridine(34) in tRNA + AH2 + ATP = 2-thiouridine(34) in tRNA + L-cysteinyl-[protein] + A + AMP + diphosphate + H(+)</text>
        <dbReference type="Rhea" id="RHEA:47032"/>
        <dbReference type="Rhea" id="RHEA-COMP:10131"/>
        <dbReference type="Rhea" id="RHEA-COMP:11726"/>
        <dbReference type="Rhea" id="RHEA-COMP:11727"/>
        <dbReference type="Rhea" id="RHEA-COMP:11728"/>
        <dbReference type="ChEBI" id="CHEBI:13193"/>
        <dbReference type="ChEBI" id="CHEBI:15378"/>
        <dbReference type="ChEBI" id="CHEBI:17499"/>
        <dbReference type="ChEBI" id="CHEBI:29950"/>
        <dbReference type="ChEBI" id="CHEBI:30616"/>
        <dbReference type="ChEBI" id="CHEBI:33019"/>
        <dbReference type="ChEBI" id="CHEBI:61963"/>
        <dbReference type="ChEBI" id="CHEBI:65315"/>
        <dbReference type="ChEBI" id="CHEBI:87170"/>
        <dbReference type="ChEBI" id="CHEBI:456215"/>
        <dbReference type="EC" id="2.8.1.13"/>
    </reaction>
</comment>
<comment type="subcellular location">
    <subcellularLocation>
        <location evidence="1">Cytoplasm</location>
    </subcellularLocation>
</comment>
<comment type="similarity">
    <text evidence="1">Belongs to the MnmA/TRMU family.</text>
</comment>